<accession>Q7N8X1</accession>
<name>LSPA_PHOLL</name>
<organism>
    <name type="scientific">Photorhabdus laumondii subsp. laumondii (strain DSM 15139 / CIP 105565 / TT01)</name>
    <name type="common">Photorhabdus luminescens subsp. laumondii</name>
    <dbReference type="NCBI Taxonomy" id="243265"/>
    <lineage>
        <taxon>Bacteria</taxon>
        <taxon>Pseudomonadati</taxon>
        <taxon>Pseudomonadota</taxon>
        <taxon>Gammaproteobacteria</taxon>
        <taxon>Enterobacterales</taxon>
        <taxon>Morganellaceae</taxon>
        <taxon>Photorhabdus</taxon>
    </lineage>
</organism>
<sequence length="167" mass="18802">MNKPICSTGLRWLWLVVVVLILDLGSKQLVLQHFHLYESVPLIPYFNLTYAQNFGAAFSFLAEKDGWQRWFFAFIAVAISVVLMVMMYRASAKKKLSNIAYALIIGGALGNLFDRLVHGFVIDFIDFYVGDWHFPTFNIADMAICIGAGLVIIDSFLSPDEKTIKVG</sequence>
<reference key="1">
    <citation type="journal article" date="2003" name="Nat. Biotechnol.">
        <title>The genome sequence of the entomopathogenic bacterium Photorhabdus luminescens.</title>
        <authorList>
            <person name="Duchaud E."/>
            <person name="Rusniok C."/>
            <person name="Frangeul L."/>
            <person name="Buchrieser C."/>
            <person name="Givaudan A."/>
            <person name="Taourit S."/>
            <person name="Bocs S."/>
            <person name="Boursaux-Eude C."/>
            <person name="Chandler M."/>
            <person name="Charles J.-F."/>
            <person name="Dassa E."/>
            <person name="Derose R."/>
            <person name="Derzelle S."/>
            <person name="Freyssinet G."/>
            <person name="Gaudriault S."/>
            <person name="Medigue C."/>
            <person name="Lanois A."/>
            <person name="Powell K."/>
            <person name="Siguier P."/>
            <person name="Vincent R."/>
            <person name="Wingate V."/>
            <person name="Zouine M."/>
            <person name="Glaser P."/>
            <person name="Boemare N."/>
            <person name="Danchin A."/>
            <person name="Kunst F."/>
        </authorList>
    </citation>
    <scope>NUCLEOTIDE SEQUENCE [LARGE SCALE GENOMIC DNA]</scope>
    <source>
        <strain>DSM 15139 / CIP 105565 / TT01</strain>
    </source>
</reference>
<comment type="function">
    <text evidence="1">This protein specifically catalyzes the removal of signal peptides from prolipoproteins.</text>
</comment>
<comment type="catalytic activity">
    <reaction evidence="1">
        <text>Release of signal peptides from bacterial membrane prolipoproteins. Hydrolyzes -Xaa-Yaa-Zaa-|-(S,diacylglyceryl)Cys-, in which Xaa is hydrophobic (preferably Leu), and Yaa (Ala or Ser) and Zaa (Gly or Ala) have small, neutral side chains.</text>
        <dbReference type="EC" id="3.4.23.36"/>
    </reaction>
</comment>
<comment type="pathway">
    <text evidence="1">Protein modification; lipoprotein biosynthesis (signal peptide cleavage).</text>
</comment>
<comment type="subcellular location">
    <subcellularLocation>
        <location evidence="1">Cell inner membrane</location>
        <topology evidence="1">Multi-pass membrane protein</topology>
    </subcellularLocation>
</comment>
<comment type="similarity">
    <text evidence="1">Belongs to the peptidase A8 family.</text>
</comment>
<gene>
    <name evidence="1" type="primary">lspA</name>
    <name type="ordered locus">plu0592</name>
</gene>
<dbReference type="EC" id="3.4.23.36" evidence="1"/>
<dbReference type="EMBL" id="BX571860">
    <property type="protein sequence ID" value="CAE12887.1"/>
    <property type="molecule type" value="Genomic_DNA"/>
</dbReference>
<dbReference type="RefSeq" id="WP_011144971.1">
    <property type="nucleotide sequence ID" value="NC_005126.1"/>
</dbReference>
<dbReference type="SMR" id="Q7N8X1"/>
<dbReference type="STRING" id="243265.plu0592"/>
<dbReference type="MEROPS" id="A08.001"/>
<dbReference type="GeneID" id="88805897"/>
<dbReference type="KEGG" id="plu:plu0592"/>
<dbReference type="eggNOG" id="COG0597">
    <property type="taxonomic scope" value="Bacteria"/>
</dbReference>
<dbReference type="HOGENOM" id="CLU_083252_4_0_6"/>
<dbReference type="OrthoDB" id="9810259at2"/>
<dbReference type="UniPathway" id="UPA00665"/>
<dbReference type="Proteomes" id="UP000002514">
    <property type="component" value="Chromosome"/>
</dbReference>
<dbReference type="GO" id="GO:0005886">
    <property type="term" value="C:plasma membrane"/>
    <property type="evidence" value="ECO:0007669"/>
    <property type="project" value="UniProtKB-SubCell"/>
</dbReference>
<dbReference type="GO" id="GO:0004190">
    <property type="term" value="F:aspartic-type endopeptidase activity"/>
    <property type="evidence" value="ECO:0007669"/>
    <property type="project" value="UniProtKB-UniRule"/>
</dbReference>
<dbReference type="GO" id="GO:0006508">
    <property type="term" value="P:proteolysis"/>
    <property type="evidence" value="ECO:0007669"/>
    <property type="project" value="UniProtKB-KW"/>
</dbReference>
<dbReference type="HAMAP" id="MF_00161">
    <property type="entry name" value="LspA"/>
    <property type="match status" value="1"/>
</dbReference>
<dbReference type="InterPro" id="IPR001872">
    <property type="entry name" value="Peptidase_A8"/>
</dbReference>
<dbReference type="NCBIfam" id="TIGR00077">
    <property type="entry name" value="lspA"/>
    <property type="match status" value="1"/>
</dbReference>
<dbReference type="PANTHER" id="PTHR33695">
    <property type="entry name" value="LIPOPROTEIN SIGNAL PEPTIDASE"/>
    <property type="match status" value="1"/>
</dbReference>
<dbReference type="PANTHER" id="PTHR33695:SF1">
    <property type="entry name" value="LIPOPROTEIN SIGNAL PEPTIDASE"/>
    <property type="match status" value="1"/>
</dbReference>
<dbReference type="Pfam" id="PF01252">
    <property type="entry name" value="Peptidase_A8"/>
    <property type="match status" value="1"/>
</dbReference>
<dbReference type="PRINTS" id="PR00781">
    <property type="entry name" value="LIPOSIGPTASE"/>
</dbReference>
<dbReference type="PROSITE" id="PS00855">
    <property type="entry name" value="SPASE_II"/>
    <property type="match status" value="1"/>
</dbReference>
<keyword id="KW-0064">Aspartyl protease</keyword>
<keyword id="KW-0997">Cell inner membrane</keyword>
<keyword id="KW-1003">Cell membrane</keyword>
<keyword id="KW-0378">Hydrolase</keyword>
<keyword id="KW-0472">Membrane</keyword>
<keyword id="KW-0645">Protease</keyword>
<keyword id="KW-1185">Reference proteome</keyword>
<keyword id="KW-0812">Transmembrane</keyword>
<keyword id="KW-1133">Transmembrane helix</keyword>
<protein>
    <recommendedName>
        <fullName evidence="1">Lipoprotein signal peptidase</fullName>
        <ecNumber evidence="1">3.4.23.36</ecNumber>
    </recommendedName>
    <alternativeName>
        <fullName evidence="1">Prolipoprotein signal peptidase</fullName>
    </alternativeName>
    <alternativeName>
        <fullName evidence="1">Signal peptidase II</fullName>
        <shortName evidence="1">SPase II</shortName>
    </alternativeName>
</protein>
<evidence type="ECO:0000255" key="1">
    <source>
        <dbReference type="HAMAP-Rule" id="MF_00161"/>
    </source>
</evidence>
<proteinExistence type="inferred from homology"/>
<feature type="chain" id="PRO_0000289408" description="Lipoprotein signal peptidase">
    <location>
        <begin position="1"/>
        <end position="167"/>
    </location>
</feature>
<feature type="transmembrane region" description="Helical" evidence="1">
    <location>
        <begin position="5"/>
        <end position="25"/>
    </location>
</feature>
<feature type="transmembrane region" description="Helical" evidence="1">
    <location>
        <begin position="42"/>
        <end position="62"/>
    </location>
</feature>
<feature type="transmembrane region" description="Helical" evidence="1">
    <location>
        <begin position="70"/>
        <end position="90"/>
    </location>
</feature>
<feature type="transmembrane region" description="Helical" evidence="1">
    <location>
        <begin position="102"/>
        <end position="122"/>
    </location>
</feature>
<feature type="transmembrane region" description="Helical" evidence="1">
    <location>
        <begin position="137"/>
        <end position="157"/>
    </location>
</feature>
<feature type="active site" evidence="1">
    <location>
        <position position="123"/>
    </location>
</feature>
<feature type="active site" evidence="1">
    <location>
        <position position="141"/>
    </location>
</feature>